<feature type="chain" id="PRO_0000100250" description="Cold shock-like protein CspD">
    <location>
        <begin position="1"/>
        <end position="74"/>
    </location>
</feature>
<feature type="domain" description="CSD">
    <location>
        <begin position="4"/>
        <end position="64"/>
    </location>
</feature>
<keyword id="KW-0963">Cytoplasm</keyword>
<keyword id="KW-0236">DNA replication inhibitor</keyword>
<keyword id="KW-0238">DNA-binding</keyword>
<keyword id="KW-1185">Reference proteome</keyword>
<keyword id="KW-0694">RNA-binding</keyword>
<reference key="1">
    <citation type="journal article" date="2002" name="Proc. Natl. Acad. Sci. U.S.A.">
        <title>Extensive mosaic structure revealed by the complete genome sequence of uropathogenic Escherichia coli.</title>
        <authorList>
            <person name="Welch R.A."/>
            <person name="Burland V."/>
            <person name="Plunkett G. III"/>
            <person name="Redford P."/>
            <person name="Roesch P."/>
            <person name="Rasko D."/>
            <person name="Buckles E.L."/>
            <person name="Liou S.-R."/>
            <person name="Boutin A."/>
            <person name="Hackett J."/>
            <person name="Stroud D."/>
            <person name="Mayhew G.F."/>
            <person name="Rose D.J."/>
            <person name="Zhou S."/>
            <person name="Schwartz D.C."/>
            <person name="Perna N.T."/>
            <person name="Mobley H.L.T."/>
            <person name="Donnenberg M.S."/>
            <person name="Blattner F.R."/>
        </authorList>
    </citation>
    <scope>NUCLEOTIDE SEQUENCE [LARGE SCALE GENOMIC DNA]</scope>
    <source>
        <strain>CFT073 / ATCC 700928 / UPEC</strain>
    </source>
</reference>
<gene>
    <name type="primary">cspD</name>
    <name type="ordered locus">c1017</name>
</gene>
<evidence type="ECO:0000250" key="1"/>
<evidence type="ECO:0000305" key="2"/>
<proteinExistence type="inferred from homology"/>
<comment type="function">
    <text evidence="1">Inhibits DNA replication at both initiation and elongation steps, most probably by binding to the opened, single-stranded regions at replication forks. Plays a regulatory role in chromosomal replication in nutrient-depleted cells (By similarity).</text>
</comment>
<comment type="subunit">
    <text evidence="1">Homodimer.</text>
</comment>
<comment type="subcellular location">
    <subcellularLocation>
        <location evidence="1">Cytoplasm</location>
    </subcellularLocation>
</comment>
<comment type="miscellaneous">
    <text evidence="1">Binds single-stranded DNA and RNA, but not double-stranded DNA, through hydrophobic interaction without sequence specificity, resulting in a packed structure.</text>
</comment>
<comment type="sequence caution" evidence="2">
    <conflict type="erroneous initiation">
        <sequence resource="EMBL-CDS" id="AAN79489"/>
    </conflict>
</comment>
<protein>
    <recommendedName>
        <fullName>Cold shock-like protein CspD</fullName>
        <shortName>CSP-D</shortName>
    </recommendedName>
</protein>
<accession>P0A969</accession>
<accession>P24245</accession>
<organism>
    <name type="scientific">Escherichia coli O6:H1 (strain CFT073 / ATCC 700928 / UPEC)</name>
    <dbReference type="NCBI Taxonomy" id="199310"/>
    <lineage>
        <taxon>Bacteria</taxon>
        <taxon>Pseudomonadati</taxon>
        <taxon>Pseudomonadota</taxon>
        <taxon>Gammaproteobacteria</taxon>
        <taxon>Enterobacterales</taxon>
        <taxon>Enterobacteriaceae</taxon>
        <taxon>Escherichia</taxon>
    </lineage>
</organism>
<dbReference type="EMBL" id="AE014075">
    <property type="protein sequence ID" value="AAN79489.1"/>
    <property type="status" value="ALT_INIT"/>
    <property type="molecule type" value="Genomic_DNA"/>
</dbReference>
<dbReference type="RefSeq" id="WP_000410785.1">
    <property type="nucleotide sequence ID" value="NZ_CP051263.1"/>
</dbReference>
<dbReference type="SMR" id="P0A969"/>
<dbReference type="STRING" id="199310.c1017"/>
<dbReference type="GeneID" id="93776540"/>
<dbReference type="KEGG" id="ecc:c1017"/>
<dbReference type="eggNOG" id="COG1278">
    <property type="taxonomic scope" value="Bacteria"/>
</dbReference>
<dbReference type="HOGENOM" id="CLU_117621_0_2_6"/>
<dbReference type="Proteomes" id="UP000001410">
    <property type="component" value="Chromosome"/>
</dbReference>
<dbReference type="GO" id="GO:0005829">
    <property type="term" value="C:cytosol"/>
    <property type="evidence" value="ECO:0007669"/>
    <property type="project" value="UniProtKB-ARBA"/>
</dbReference>
<dbReference type="GO" id="GO:0003677">
    <property type="term" value="F:DNA binding"/>
    <property type="evidence" value="ECO:0007669"/>
    <property type="project" value="UniProtKB-KW"/>
</dbReference>
<dbReference type="GO" id="GO:0003723">
    <property type="term" value="F:RNA binding"/>
    <property type="evidence" value="ECO:0007669"/>
    <property type="project" value="UniProtKB-KW"/>
</dbReference>
<dbReference type="GO" id="GO:0008156">
    <property type="term" value="P:negative regulation of DNA replication"/>
    <property type="evidence" value="ECO:0007669"/>
    <property type="project" value="UniProtKB-KW"/>
</dbReference>
<dbReference type="GO" id="GO:0006355">
    <property type="term" value="P:regulation of DNA-templated transcription"/>
    <property type="evidence" value="ECO:0007669"/>
    <property type="project" value="InterPro"/>
</dbReference>
<dbReference type="CDD" id="cd04458">
    <property type="entry name" value="CSP_CDS"/>
    <property type="match status" value="1"/>
</dbReference>
<dbReference type="FunFam" id="2.40.50.140:FF:000006">
    <property type="entry name" value="Cold shock protein CspC"/>
    <property type="match status" value="1"/>
</dbReference>
<dbReference type="Gene3D" id="2.40.50.140">
    <property type="entry name" value="Nucleic acid-binding proteins"/>
    <property type="match status" value="1"/>
</dbReference>
<dbReference type="InterPro" id="IPR012156">
    <property type="entry name" value="Cold_shock_CspA"/>
</dbReference>
<dbReference type="InterPro" id="IPR050181">
    <property type="entry name" value="Cold_shock_domain"/>
</dbReference>
<dbReference type="InterPro" id="IPR011129">
    <property type="entry name" value="CSD"/>
</dbReference>
<dbReference type="InterPro" id="IPR019844">
    <property type="entry name" value="CSD_CS"/>
</dbReference>
<dbReference type="InterPro" id="IPR002059">
    <property type="entry name" value="CSP_DNA-bd"/>
</dbReference>
<dbReference type="InterPro" id="IPR012751">
    <property type="entry name" value="CspD"/>
</dbReference>
<dbReference type="InterPro" id="IPR012340">
    <property type="entry name" value="NA-bd_OB-fold"/>
</dbReference>
<dbReference type="NCBIfam" id="TIGR02381">
    <property type="entry name" value="cspD"/>
    <property type="match status" value="1"/>
</dbReference>
<dbReference type="NCBIfam" id="NF007405">
    <property type="entry name" value="PRK09937.1"/>
    <property type="match status" value="1"/>
</dbReference>
<dbReference type="NCBIfam" id="NF011574">
    <property type="entry name" value="PRK14998.1"/>
    <property type="match status" value="1"/>
</dbReference>
<dbReference type="PANTHER" id="PTHR11544">
    <property type="entry name" value="COLD SHOCK DOMAIN CONTAINING PROTEINS"/>
    <property type="match status" value="1"/>
</dbReference>
<dbReference type="Pfam" id="PF00313">
    <property type="entry name" value="CSD"/>
    <property type="match status" value="1"/>
</dbReference>
<dbReference type="PIRSF" id="PIRSF002599">
    <property type="entry name" value="Cold_shock_A"/>
    <property type="match status" value="1"/>
</dbReference>
<dbReference type="PRINTS" id="PR00050">
    <property type="entry name" value="COLDSHOCK"/>
</dbReference>
<dbReference type="SMART" id="SM00357">
    <property type="entry name" value="CSP"/>
    <property type="match status" value="1"/>
</dbReference>
<dbReference type="SUPFAM" id="SSF50249">
    <property type="entry name" value="Nucleic acid-binding proteins"/>
    <property type="match status" value="1"/>
</dbReference>
<dbReference type="PROSITE" id="PS00352">
    <property type="entry name" value="CSD_1"/>
    <property type="match status" value="1"/>
</dbReference>
<dbReference type="PROSITE" id="PS51857">
    <property type="entry name" value="CSD_2"/>
    <property type="match status" value="1"/>
</dbReference>
<sequence length="74" mass="7969">MEKGTVKWFNNAKGFGFICPEGGGEDIFAHYSTIQMDGYRTLKAGQSVQFDVHQGPKGNHASVIVPVEVEAAVA</sequence>
<name>CSPD_ECOL6</name>